<accession>B2T2D2</accession>
<name>PSD_PARPJ</name>
<protein>
    <recommendedName>
        <fullName evidence="1">Phosphatidylserine decarboxylase proenzyme</fullName>
        <ecNumber evidence="1">4.1.1.65</ecNumber>
    </recommendedName>
    <component>
        <recommendedName>
            <fullName evidence="1">Phosphatidylserine decarboxylase alpha chain</fullName>
        </recommendedName>
    </component>
    <component>
        <recommendedName>
            <fullName evidence="1">Phosphatidylserine decarboxylase beta chain</fullName>
        </recommendedName>
    </component>
</protein>
<feature type="chain" id="PRO_1000131454" description="Phosphatidylserine decarboxylase beta chain" evidence="1">
    <location>
        <begin position="1"/>
        <end position="181"/>
    </location>
</feature>
<feature type="chain" id="PRO_1000131455" description="Phosphatidylserine decarboxylase alpha chain" evidence="1">
    <location>
        <begin position="182"/>
        <end position="212"/>
    </location>
</feature>
<feature type="active site" description="Schiff-base intermediate with substrate; via pyruvic acid" evidence="1">
    <location>
        <position position="182"/>
    </location>
</feature>
<feature type="site" description="Cleavage (non-hydrolytic); by autocatalysis" evidence="1">
    <location>
        <begin position="181"/>
        <end position="182"/>
    </location>
</feature>
<feature type="modified residue" description="Pyruvic acid (Ser); by autocatalysis" evidence="1">
    <location>
        <position position="182"/>
    </location>
</feature>
<comment type="function">
    <text evidence="1">Catalyzes the formation of phosphatidylethanolamine (PtdEtn) from phosphatidylserine (PtdSer).</text>
</comment>
<comment type="catalytic activity">
    <reaction evidence="1">
        <text>a 1,2-diacyl-sn-glycero-3-phospho-L-serine + H(+) = a 1,2-diacyl-sn-glycero-3-phosphoethanolamine + CO2</text>
        <dbReference type="Rhea" id="RHEA:20828"/>
        <dbReference type="ChEBI" id="CHEBI:15378"/>
        <dbReference type="ChEBI" id="CHEBI:16526"/>
        <dbReference type="ChEBI" id="CHEBI:57262"/>
        <dbReference type="ChEBI" id="CHEBI:64612"/>
        <dbReference type="EC" id="4.1.1.65"/>
    </reaction>
</comment>
<comment type="cofactor">
    <cofactor evidence="1">
        <name>pyruvate</name>
        <dbReference type="ChEBI" id="CHEBI:15361"/>
    </cofactor>
    <text evidence="1">Binds 1 pyruvoyl group covalently per subunit.</text>
</comment>
<comment type="pathway">
    <text evidence="1">Phospholipid metabolism; phosphatidylethanolamine biosynthesis; phosphatidylethanolamine from CDP-diacylglycerol: step 2/2.</text>
</comment>
<comment type="subunit">
    <text evidence="1">Heterodimer of a large membrane-associated beta subunit and a small pyruvoyl-containing alpha subunit.</text>
</comment>
<comment type="subcellular location">
    <subcellularLocation>
        <location evidence="1">Cell membrane</location>
        <topology evidence="1">Peripheral membrane protein</topology>
    </subcellularLocation>
</comment>
<comment type="PTM">
    <text evidence="1">Is synthesized initially as an inactive proenzyme. Formation of the active enzyme involves a self-maturation process in which the active site pyruvoyl group is generated from an internal serine residue via an autocatalytic post-translational modification. Two non-identical subunits are generated from the proenzyme in this reaction, and the pyruvate is formed at the N-terminus of the alpha chain, which is derived from the carboxyl end of the proenzyme. The post-translation cleavage follows an unusual pathway, termed non-hydrolytic serinolysis, in which the side chain hydroxyl group of the serine supplies its oxygen atom to form the C-terminus of the beta chain, while the remainder of the serine residue undergoes an oxidative deamination to produce ammonia and the pyruvoyl prosthetic group on the alpha chain.</text>
</comment>
<comment type="similarity">
    <text evidence="1">Belongs to the phosphatidylserine decarboxylase family. PSD-A subfamily.</text>
</comment>
<evidence type="ECO:0000255" key="1">
    <source>
        <dbReference type="HAMAP-Rule" id="MF_00664"/>
    </source>
</evidence>
<keyword id="KW-1003">Cell membrane</keyword>
<keyword id="KW-0210">Decarboxylase</keyword>
<keyword id="KW-0444">Lipid biosynthesis</keyword>
<keyword id="KW-0443">Lipid metabolism</keyword>
<keyword id="KW-0456">Lyase</keyword>
<keyword id="KW-0472">Membrane</keyword>
<keyword id="KW-0594">Phospholipid biosynthesis</keyword>
<keyword id="KW-1208">Phospholipid metabolism</keyword>
<keyword id="KW-0670">Pyruvate</keyword>
<keyword id="KW-0865">Zymogen</keyword>
<proteinExistence type="inferred from homology"/>
<reference key="1">
    <citation type="journal article" date="2011" name="J. Bacteriol.">
        <title>Complete genome sequence of the plant growth-promoting endophyte Burkholderia phytofirmans strain PsJN.</title>
        <authorList>
            <person name="Weilharter A."/>
            <person name="Mitter B."/>
            <person name="Shin M.V."/>
            <person name="Chain P.S."/>
            <person name="Nowak J."/>
            <person name="Sessitsch A."/>
        </authorList>
    </citation>
    <scope>NUCLEOTIDE SEQUENCE [LARGE SCALE GENOMIC DNA]</scope>
    <source>
        <strain>DSM 17436 / LMG 22146 / PsJN</strain>
    </source>
</reference>
<organism>
    <name type="scientific">Paraburkholderia phytofirmans (strain DSM 17436 / LMG 22146 / PsJN)</name>
    <name type="common">Burkholderia phytofirmans</name>
    <dbReference type="NCBI Taxonomy" id="398527"/>
    <lineage>
        <taxon>Bacteria</taxon>
        <taxon>Pseudomonadati</taxon>
        <taxon>Pseudomonadota</taxon>
        <taxon>Betaproteobacteria</taxon>
        <taxon>Burkholderiales</taxon>
        <taxon>Burkholderiaceae</taxon>
        <taxon>Paraburkholderia</taxon>
    </lineage>
</organism>
<dbReference type="EC" id="4.1.1.65" evidence="1"/>
<dbReference type="EMBL" id="CP001052">
    <property type="protein sequence ID" value="ACD15746.1"/>
    <property type="molecule type" value="Genomic_DNA"/>
</dbReference>
<dbReference type="RefSeq" id="WP_012432365.1">
    <property type="nucleotide sequence ID" value="NC_010681.1"/>
</dbReference>
<dbReference type="STRING" id="398527.Bphyt_1331"/>
<dbReference type="KEGG" id="bpy:Bphyt_1331"/>
<dbReference type="eggNOG" id="COG0688">
    <property type="taxonomic scope" value="Bacteria"/>
</dbReference>
<dbReference type="HOGENOM" id="CLU_072492_0_0_4"/>
<dbReference type="OrthoDB" id="9790893at2"/>
<dbReference type="UniPathway" id="UPA00558">
    <property type="reaction ID" value="UER00616"/>
</dbReference>
<dbReference type="Proteomes" id="UP000001739">
    <property type="component" value="Chromosome 1"/>
</dbReference>
<dbReference type="GO" id="GO:0005886">
    <property type="term" value="C:plasma membrane"/>
    <property type="evidence" value="ECO:0007669"/>
    <property type="project" value="UniProtKB-SubCell"/>
</dbReference>
<dbReference type="GO" id="GO:0004609">
    <property type="term" value="F:phosphatidylserine decarboxylase activity"/>
    <property type="evidence" value="ECO:0007669"/>
    <property type="project" value="UniProtKB-UniRule"/>
</dbReference>
<dbReference type="GO" id="GO:0006646">
    <property type="term" value="P:phosphatidylethanolamine biosynthetic process"/>
    <property type="evidence" value="ECO:0007669"/>
    <property type="project" value="UniProtKB-UniRule"/>
</dbReference>
<dbReference type="HAMAP" id="MF_00664">
    <property type="entry name" value="PS_decarb_PSD_A"/>
    <property type="match status" value="1"/>
</dbReference>
<dbReference type="InterPro" id="IPR003817">
    <property type="entry name" value="PS_Dcarbxylase"/>
</dbReference>
<dbReference type="InterPro" id="IPR033175">
    <property type="entry name" value="PSD-A"/>
</dbReference>
<dbReference type="NCBIfam" id="NF003678">
    <property type="entry name" value="PRK05305.1-2"/>
    <property type="match status" value="1"/>
</dbReference>
<dbReference type="NCBIfam" id="NF003680">
    <property type="entry name" value="PRK05305.1-5"/>
    <property type="match status" value="1"/>
</dbReference>
<dbReference type="NCBIfam" id="NF003685">
    <property type="entry name" value="PRK05305.2-5"/>
    <property type="match status" value="1"/>
</dbReference>
<dbReference type="PANTHER" id="PTHR35809">
    <property type="entry name" value="ARCHAETIDYLSERINE DECARBOXYLASE PROENZYME-RELATED"/>
    <property type="match status" value="1"/>
</dbReference>
<dbReference type="PANTHER" id="PTHR35809:SF1">
    <property type="entry name" value="ARCHAETIDYLSERINE DECARBOXYLASE PROENZYME-RELATED"/>
    <property type="match status" value="1"/>
</dbReference>
<dbReference type="Pfam" id="PF02666">
    <property type="entry name" value="PS_Dcarbxylase"/>
    <property type="match status" value="1"/>
</dbReference>
<gene>
    <name evidence="1" type="primary">psd</name>
    <name type="ordered locus">Bphyt_1331</name>
</gene>
<sequence length="212" mass="23262">MNYPHPIIAREGWPFIAIAAVVALLVHFIAGFGFSWLFWLLLIFVVQFFRDPARPIPTQANAVLCPADGRIVAVETAHDPYANREALKISVFMNVFNVHSQRSPVDGAISKVEYFPGAYLNAAVDKASTENERNAVVIEMAGGQTVTSVQIAGLIARRILCYVRAGEPLTRGQRYGFIRFGSRVDVYLPVGSRPRVSIGEKVSASSTILAEL</sequence>